<organism>
    <name type="scientific">Pseudomonas knackmussii (strain DSM 6978 / CCUG 54928 / LMG 23759 / B13)</name>
    <dbReference type="NCBI Taxonomy" id="1301098"/>
    <lineage>
        <taxon>Bacteria</taxon>
        <taxon>Pseudomonadati</taxon>
        <taxon>Pseudomonadota</taxon>
        <taxon>Gammaproteobacteria</taxon>
        <taxon>Pseudomonadales</taxon>
        <taxon>Pseudomonadaceae</taxon>
        <taxon>Pseudomonas</taxon>
    </lineage>
</organism>
<comment type="function">
    <text>Catalyzes thiolytic cleavage of beta-ketoadipyl-CoA to succinyl-CoA and acetyl-CoA.</text>
</comment>
<comment type="catalytic activity">
    <reaction evidence="3">
        <text>succinyl-CoA + acetyl-CoA = 3-oxoadipyl-CoA + CoA</text>
        <dbReference type="Rhea" id="RHEA:19481"/>
        <dbReference type="ChEBI" id="CHEBI:57287"/>
        <dbReference type="ChEBI" id="CHEBI:57288"/>
        <dbReference type="ChEBI" id="CHEBI:57292"/>
        <dbReference type="ChEBI" id="CHEBI:57348"/>
        <dbReference type="EC" id="2.3.1.174"/>
    </reaction>
</comment>
<comment type="biophysicochemical properties">
    <kinetics>
        <KM evidence="3">0.15 mM for 3-oxoadipyl-CoA</KM>
        <KM evidence="3">0.01 mM for CoA</KM>
    </kinetics>
    <phDependence>
        <text evidence="3">Optimum pH is 7.8.</text>
    </phDependence>
</comment>
<comment type="pathway">
    <text>Aromatic compound metabolism; beta-ketoadipate pathway; acetyl-CoA and succinyl-CoA from 3-oxoadipate: step 2/2.</text>
</comment>
<comment type="subunit">
    <text evidence="3">Homotetramer.</text>
</comment>
<comment type="similarity">
    <text evidence="4">Belongs to the thiolase-like superfamily. Thiolase family.</text>
</comment>
<protein>
    <recommendedName>
        <fullName>Beta-ketoadipyl-CoA thiolase</fullName>
        <ecNumber>2.3.1.174</ecNumber>
    </recommendedName>
    <alternativeName>
        <fullName>3-oxoadipyl-CoA thiolase</fullName>
    </alternativeName>
</protein>
<gene>
    <name type="primary">pcaF</name>
    <name type="synonym">catF</name>
</gene>
<dbReference type="EC" id="2.3.1.174"/>
<dbReference type="EMBL" id="AY044272">
    <property type="protein sequence ID" value="AAL02407.1"/>
    <property type="molecule type" value="Genomic_DNA"/>
</dbReference>
<dbReference type="RefSeq" id="WP_043252818.1">
    <property type="nucleotide sequence ID" value="NZ_HG322950.1"/>
</dbReference>
<dbReference type="SMR" id="Q8VPF1"/>
<dbReference type="STRING" id="1301098.PKB_2950"/>
<dbReference type="eggNOG" id="COG0183">
    <property type="taxonomic scope" value="Bacteria"/>
</dbReference>
<dbReference type="OrthoDB" id="9764638at2"/>
<dbReference type="SABIO-RK" id="Q8VPF1"/>
<dbReference type="UniPathway" id="UPA00157">
    <property type="reaction ID" value="UER00263"/>
</dbReference>
<dbReference type="GO" id="GO:0033812">
    <property type="term" value="F:3-oxoadipyl-CoA thiolase activity"/>
    <property type="evidence" value="ECO:0007669"/>
    <property type="project" value="UniProtKB-EC"/>
</dbReference>
<dbReference type="GO" id="GO:0019619">
    <property type="term" value="P:3,4-dihydroxybenzoate catabolic process"/>
    <property type="evidence" value="ECO:0007669"/>
    <property type="project" value="InterPro"/>
</dbReference>
<dbReference type="GO" id="GO:0042952">
    <property type="term" value="P:beta-ketoadipate pathway"/>
    <property type="evidence" value="ECO:0007669"/>
    <property type="project" value="UniProtKB-UniPathway"/>
</dbReference>
<dbReference type="CDD" id="cd00751">
    <property type="entry name" value="thiolase"/>
    <property type="match status" value="1"/>
</dbReference>
<dbReference type="FunFam" id="3.40.47.10:FF:000010">
    <property type="entry name" value="Acetyl-CoA acetyltransferase (Thiolase)"/>
    <property type="match status" value="1"/>
</dbReference>
<dbReference type="Gene3D" id="3.40.47.10">
    <property type="match status" value="1"/>
</dbReference>
<dbReference type="InterPro" id="IPR012793">
    <property type="entry name" value="PcaF"/>
</dbReference>
<dbReference type="InterPro" id="IPR002155">
    <property type="entry name" value="Thiolase"/>
</dbReference>
<dbReference type="InterPro" id="IPR016039">
    <property type="entry name" value="Thiolase-like"/>
</dbReference>
<dbReference type="InterPro" id="IPR020615">
    <property type="entry name" value="Thiolase_acyl_enz_int_AS"/>
</dbReference>
<dbReference type="InterPro" id="IPR020610">
    <property type="entry name" value="Thiolase_AS"/>
</dbReference>
<dbReference type="InterPro" id="IPR020617">
    <property type="entry name" value="Thiolase_C"/>
</dbReference>
<dbReference type="InterPro" id="IPR020613">
    <property type="entry name" value="Thiolase_CS"/>
</dbReference>
<dbReference type="InterPro" id="IPR020616">
    <property type="entry name" value="Thiolase_N"/>
</dbReference>
<dbReference type="NCBIfam" id="TIGR01930">
    <property type="entry name" value="AcCoA-C-Actrans"/>
    <property type="match status" value="1"/>
</dbReference>
<dbReference type="NCBIfam" id="TIGR02430">
    <property type="entry name" value="pcaF"/>
    <property type="match status" value="1"/>
</dbReference>
<dbReference type="NCBIfam" id="NF006551">
    <property type="entry name" value="PRK09050.1"/>
    <property type="match status" value="1"/>
</dbReference>
<dbReference type="PANTHER" id="PTHR18919:SF107">
    <property type="entry name" value="ACETYL-COA ACETYLTRANSFERASE, CYTOSOLIC"/>
    <property type="match status" value="1"/>
</dbReference>
<dbReference type="PANTHER" id="PTHR18919">
    <property type="entry name" value="ACETYL-COA C-ACYLTRANSFERASE"/>
    <property type="match status" value="1"/>
</dbReference>
<dbReference type="Pfam" id="PF02803">
    <property type="entry name" value="Thiolase_C"/>
    <property type="match status" value="1"/>
</dbReference>
<dbReference type="Pfam" id="PF00108">
    <property type="entry name" value="Thiolase_N"/>
    <property type="match status" value="1"/>
</dbReference>
<dbReference type="PIRSF" id="PIRSF000429">
    <property type="entry name" value="Ac-CoA_Ac_transf"/>
    <property type="match status" value="1"/>
</dbReference>
<dbReference type="SUPFAM" id="SSF53901">
    <property type="entry name" value="Thiolase-like"/>
    <property type="match status" value="2"/>
</dbReference>
<dbReference type="PROSITE" id="PS00098">
    <property type="entry name" value="THIOLASE_1"/>
    <property type="match status" value="1"/>
</dbReference>
<dbReference type="PROSITE" id="PS00737">
    <property type="entry name" value="THIOLASE_2"/>
    <property type="match status" value="1"/>
</dbReference>
<dbReference type="PROSITE" id="PS00099">
    <property type="entry name" value="THIOLASE_3"/>
    <property type="match status" value="1"/>
</dbReference>
<feature type="initiator methionine" description="Removed" evidence="3">
    <location>
        <position position="1"/>
    </location>
</feature>
<feature type="chain" id="PRO_0000337672" description="Beta-ketoadipyl-CoA thiolase">
    <location>
        <begin position="2"/>
        <end position="401"/>
    </location>
</feature>
<feature type="active site" description="Acyl-thioester intermediate" evidence="1">
    <location>
        <position position="91"/>
    </location>
</feature>
<feature type="active site" description="Proton acceptor" evidence="2">
    <location>
        <position position="357"/>
    </location>
</feature>
<feature type="active site" description="Proton acceptor" evidence="2">
    <location>
        <position position="387"/>
    </location>
</feature>
<proteinExistence type="evidence at protein level"/>
<accession>Q8VPF1</accession>
<name>PCAF_PSEKB</name>
<reference key="1">
    <citation type="journal article" date="2002" name="J. Bacteriol.">
        <title>Degradation of aromatics and chloroaromatics by Pseudomonas sp. strain B13: cloning, characterization, and analysis of sequences encoding 3-oxoadipate:succinyl-coenzyme A (CoA) transferase and 3-oxoadipyl-CoA thiolase.</title>
        <authorList>
            <person name="Goebel M."/>
            <person name="Kassel-Cati K."/>
            <person name="Schmidt E."/>
            <person name="Reineke W."/>
        </authorList>
    </citation>
    <scope>NUCLEOTIDE SEQUENCE [GENOMIC DNA]</scope>
</reference>
<reference key="2">
    <citation type="journal article" date="2002" name="J. Bacteriol.">
        <title>Degradation of aromatics and chloroaromatics by Pseudomonas sp. strain B13: purification and characterization of 3-oxoadipate:succinyl-coenzyme A (CoA) transferase and 3-oxoadipyl-CoA thiolase.</title>
        <authorList>
            <person name="Kaschabek S.R."/>
            <person name="Kuhn B."/>
            <person name="Mueller D."/>
            <person name="Schmidt E."/>
            <person name="Reineke W."/>
        </authorList>
    </citation>
    <scope>PROTEIN SEQUENCE OF 2-19</scope>
    <scope>CATALYTIC ACTIVITY</scope>
    <scope>BIOPHYSICOCHEMICAL PROPERTIES</scope>
    <scope>SUBUNIT</scope>
</reference>
<sequence length="401" mass="41672">MSREVYICDAVRTPIGRFGGSLAAVRADDLAAVPVKALVERNPQVDWSQLDEVYLGCANQAGEDNRNVARMALLLAGLPDSVPGVTLNRLCASGMDAVGTAFRAIASGEAELVIAGGVESMSRAPYVMGKADSAFGRGQKIEDTTIGWRFINPLMKAQYGVDAMPETADNVADDYKVSRADQDAFALRSQQLAGRAQAAGYFAEEIVPVVIKGKKGETVVDADEHLRPDTTLEALAKLKPVNGPDKTVTAGNASGVNDGSVALILASAEAVKKHGLKARAKVLGMASAGVAPRVMGIGPVPAVRKLLERLNLSVADFDVIELNEAFAAQGLAVTRELGIADDDARVNPNGGAIALGHPLGASGARLVLTAVHQLEKSGGQRGLCTMCVGVGQGVALAVERV</sequence>
<keyword id="KW-0012">Acyltransferase</keyword>
<keyword id="KW-0058">Aromatic hydrocarbons catabolism</keyword>
<keyword id="KW-0903">Direct protein sequencing</keyword>
<keyword id="KW-0808">Transferase</keyword>
<evidence type="ECO:0000250" key="1"/>
<evidence type="ECO:0000255" key="2">
    <source>
        <dbReference type="PROSITE-ProRule" id="PRU10020"/>
    </source>
</evidence>
<evidence type="ECO:0000269" key="3">
    <source>
    </source>
</evidence>
<evidence type="ECO:0000305" key="4"/>